<name>MEND_GLOC7</name>
<proteinExistence type="inferred from homology"/>
<dbReference type="EC" id="2.2.1.9" evidence="1"/>
<dbReference type="EMBL" id="CP001291">
    <property type="protein sequence ID" value="ACK71224.1"/>
    <property type="molecule type" value="Genomic_DNA"/>
</dbReference>
<dbReference type="RefSeq" id="WP_015954824.1">
    <property type="nucleotide sequence ID" value="NC_011729.1"/>
</dbReference>
<dbReference type="SMR" id="B7K8M6"/>
<dbReference type="STRING" id="65393.PCC7424_2817"/>
<dbReference type="KEGG" id="cyc:PCC7424_2817"/>
<dbReference type="eggNOG" id="COG1165">
    <property type="taxonomic scope" value="Bacteria"/>
</dbReference>
<dbReference type="HOGENOM" id="CLU_006051_3_0_3"/>
<dbReference type="OrthoDB" id="9791859at2"/>
<dbReference type="UniPathway" id="UPA00995"/>
<dbReference type="UniPathway" id="UPA01057">
    <property type="reaction ID" value="UER00164"/>
</dbReference>
<dbReference type="Proteomes" id="UP000002384">
    <property type="component" value="Chromosome"/>
</dbReference>
<dbReference type="GO" id="GO:0070204">
    <property type="term" value="F:2-succinyl-5-enolpyruvyl-6-hydroxy-3-cyclohexene-1-carboxylic-acid synthase activity"/>
    <property type="evidence" value="ECO:0007669"/>
    <property type="project" value="UniProtKB-UniRule"/>
</dbReference>
<dbReference type="GO" id="GO:0000287">
    <property type="term" value="F:magnesium ion binding"/>
    <property type="evidence" value="ECO:0007669"/>
    <property type="project" value="UniProtKB-UniRule"/>
</dbReference>
<dbReference type="GO" id="GO:0030145">
    <property type="term" value="F:manganese ion binding"/>
    <property type="evidence" value="ECO:0007669"/>
    <property type="project" value="UniProtKB-UniRule"/>
</dbReference>
<dbReference type="GO" id="GO:0030976">
    <property type="term" value="F:thiamine pyrophosphate binding"/>
    <property type="evidence" value="ECO:0007669"/>
    <property type="project" value="UniProtKB-UniRule"/>
</dbReference>
<dbReference type="GO" id="GO:0009234">
    <property type="term" value="P:menaquinone biosynthetic process"/>
    <property type="evidence" value="ECO:0007669"/>
    <property type="project" value="InterPro"/>
</dbReference>
<dbReference type="GO" id="GO:0042372">
    <property type="term" value="P:phylloquinone biosynthetic process"/>
    <property type="evidence" value="ECO:0007669"/>
    <property type="project" value="UniProtKB-UniRule"/>
</dbReference>
<dbReference type="CDD" id="cd07037">
    <property type="entry name" value="TPP_PYR_MenD"/>
    <property type="match status" value="1"/>
</dbReference>
<dbReference type="CDD" id="cd02009">
    <property type="entry name" value="TPP_SHCHC_synthase"/>
    <property type="match status" value="1"/>
</dbReference>
<dbReference type="Gene3D" id="3.40.50.970">
    <property type="match status" value="2"/>
</dbReference>
<dbReference type="Gene3D" id="3.40.50.1220">
    <property type="entry name" value="TPP-binding domain"/>
    <property type="match status" value="1"/>
</dbReference>
<dbReference type="HAMAP" id="MF_01659">
    <property type="entry name" value="MenD"/>
    <property type="match status" value="1"/>
</dbReference>
<dbReference type="InterPro" id="IPR004433">
    <property type="entry name" value="MenaQ_synth_MenD"/>
</dbReference>
<dbReference type="InterPro" id="IPR032264">
    <property type="entry name" value="MenD_middle"/>
</dbReference>
<dbReference type="InterPro" id="IPR029061">
    <property type="entry name" value="THDP-binding"/>
</dbReference>
<dbReference type="InterPro" id="IPR012001">
    <property type="entry name" value="Thiamin_PyroP_enz_TPP-bd_dom"/>
</dbReference>
<dbReference type="InterPro" id="IPR011766">
    <property type="entry name" value="TPP_enzyme_TPP-bd"/>
</dbReference>
<dbReference type="NCBIfam" id="TIGR00173">
    <property type="entry name" value="menD"/>
    <property type="match status" value="1"/>
</dbReference>
<dbReference type="PANTHER" id="PTHR42916">
    <property type="entry name" value="2-SUCCINYL-5-ENOLPYRUVYL-6-HYDROXY-3-CYCLOHEXENE-1-CARBOXYLATE SYNTHASE"/>
    <property type="match status" value="1"/>
</dbReference>
<dbReference type="PANTHER" id="PTHR42916:SF1">
    <property type="entry name" value="PROTEIN PHYLLO, CHLOROPLASTIC"/>
    <property type="match status" value="1"/>
</dbReference>
<dbReference type="Pfam" id="PF02775">
    <property type="entry name" value="TPP_enzyme_C"/>
    <property type="match status" value="1"/>
</dbReference>
<dbReference type="Pfam" id="PF16582">
    <property type="entry name" value="TPP_enzyme_M_2"/>
    <property type="match status" value="1"/>
</dbReference>
<dbReference type="Pfam" id="PF02776">
    <property type="entry name" value="TPP_enzyme_N"/>
    <property type="match status" value="1"/>
</dbReference>
<dbReference type="PIRSF" id="PIRSF004983">
    <property type="entry name" value="MenD"/>
    <property type="match status" value="1"/>
</dbReference>
<dbReference type="SUPFAM" id="SSF52518">
    <property type="entry name" value="Thiamin diphosphate-binding fold (THDP-binding)"/>
    <property type="match status" value="2"/>
</dbReference>
<gene>
    <name evidence="1" type="primary">menD</name>
    <name type="ordered locus">PCC7424_2817</name>
</gene>
<evidence type="ECO:0000255" key="1">
    <source>
        <dbReference type="HAMAP-Rule" id="MF_01659"/>
    </source>
</evidence>
<reference key="1">
    <citation type="journal article" date="2011" name="MBio">
        <title>Novel metabolic attributes of the genus Cyanothece, comprising a group of unicellular nitrogen-fixing Cyanobacteria.</title>
        <authorList>
            <person name="Bandyopadhyay A."/>
            <person name="Elvitigala T."/>
            <person name="Welsh E."/>
            <person name="Stockel J."/>
            <person name="Liberton M."/>
            <person name="Min H."/>
            <person name="Sherman L.A."/>
            <person name="Pakrasi H.B."/>
        </authorList>
    </citation>
    <scope>NUCLEOTIDE SEQUENCE [LARGE SCALE GENOMIC DNA]</scope>
    <source>
        <strain>PCC 7424</strain>
    </source>
</reference>
<accession>B7K8M6</accession>
<protein>
    <recommendedName>
        <fullName evidence="1">2-succinyl-5-enolpyruvyl-6-hydroxy-3-cyclohexene-1-carboxylate synthase</fullName>
        <shortName evidence="1">SEPHCHC synthase</shortName>
        <ecNumber evidence="1">2.2.1.9</ecNumber>
    </recommendedName>
</protein>
<comment type="function">
    <text evidence="1">Catalyzes the thiamine diphosphate-dependent decarboxylation of 2-oxoglutarate and the subsequent addition of the resulting succinic semialdehyde-thiamine pyrophosphate anion to isochorismate to yield 2-succinyl-5-enolpyruvyl-6-hydroxy-3-cyclohexene-1-carboxylate (SEPHCHC).</text>
</comment>
<comment type="catalytic activity">
    <reaction evidence="1">
        <text>isochorismate + 2-oxoglutarate + H(+) = 5-enolpyruvoyl-6-hydroxy-2-succinyl-cyclohex-3-ene-1-carboxylate + CO2</text>
        <dbReference type="Rhea" id="RHEA:25593"/>
        <dbReference type="ChEBI" id="CHEBI:15378"/>
        <dbReference type="ChEBI" id="CHEBI:16526"/>
        <dbReference type="ChEBI" id="CHEBI:16810"/>
        <dbReference type="ChEBI" id="CHEBI:29780"/>
        <dbReference type="ChEBI" id="CHEBI:58818"/>
        <dbReference type="EC" id="2.2.1.9"/>
    </reaction>
</comment>
<comment type="cofactor">
    <cofactor evidence="1">
        <name>Mg(2+)</name>
        <dbReference type="ChEBI" id="CHEBI:18420"/>
    </cofactor>
    <cofactor evidence="1">
        <name>Mn(2+)</name>
        <dbReference type="ChEBI" id="CHEBI:29035"/>
    </cofactor>
</comment>
<comment type="cofactor">
    <cofactor evidence="1">
        <name>thiamine diphosphate</name>
        <dbReference type="ChEBI" id="CHEBI:58937"/>
    </cofactor>
    <text evidence="1">Binds 1 thiamine pyrophosphate per subunit.</text>
</comment>
<comment type="pathway">
    <text evidence="1">Quinol/quinone metabolism; 1,4-dihydroxy-2-naphthoate biosynthesis; 1,4-dihydroxy-2-naphthoate from chorismate: step 2/7.</text>
</comment>
<comment type="pathway">
    <text evidence="1">Cofactor biosynthesis; phylloquinone biosynthesis.</text>
</comment>
<comment type="subunit">
    <text evidence="1">Homodimer.</text>
</comment>
<comment type="similarity">
    <text evidence="1">Belongs to the TPP enzyme family. MenD subfamily.</text>
</comment>
<organism>
    <name type="scientific">Gloeothece citriformis (strain PCC 7424)</name>
    <name type="common">Cyanothece sp. (strain PCC 7424)</name>
    <dbReference type="NCBI Taxonomy" id="65393"/>
    <lineage>
        <taxon>Bacteria</taxon>
        <taxon>Bacillati</taxon>
        <taxon>Cyanobacteriota</taxon>
        <taxon>Cyanophyceae</taxon>
        <taxon>Oscillatoriophycideae</taxon>
        <taxon>Chroococcales</taxon>
        <taxon>Aphanothecaceae</taxon>
        <taxon>Gloeothece</taxon>
        <taxon>Gloeothece citriformis</taxon>
    </lineage>
</organism>
<sequence length="581" mass="65689">MTIDFRNVNTLWASILVETLHRLGLTTAVICPGSRSTPLTIAFANHSNIEAIPILDERSASFFALGIAKKSGLPVVLVCTSGTAGANFYPAVIEAKESHVPLLILTADRPPELRHCHAGQTIDQVKLYGNYPNWQTEIAVPSAEEGMINYLRQTLIYAWERSLFPARGVVHLNLPFREPLAPIPNSDTEKIQFNFDVENFFTEINLLNFPSSNRIEKYEKIIPKWQLFQRGIIIAGVDHSYNPQEYCRAIARLSEFLKYPVLGEALSPVRNYAALNPYLISTYDLILRNSSLAENLKPDIVIQIGELPTSKELRTWLDITQPPRWIIDNKGENLDALHGKTIHLRTSIEQLANSLSFKETISNSPYLKLWCDTEKKVRKTIDQTLESIDSLLEGKIAWLLSQTLPENTPIFIANSMSVRNAEFFWQPNNFKYIPYFNRGANGIDGTLSTALGIAHHHQSSVMLTGDLALLHDNNGFLINKKFRGHLTIILVNNDGGGIFEMLPIAQFDPYFEDFFATPQTVNFGKLCLAYGIDHYLIQDWQQLKQLLNPLPETGIRVLELNTNRKLDAEWLKTNLSKFSLT</sequence>
<feature type="chain" id="PRO_1000187064" description="2-succinyl-5-enolpyruvyl-6-hydroxy-3-cyclohexene-1-carboxylate synthase">
    <location>
        <begin position="1"/>
        <end position="581"/>
    </location>
</feature>
<keyword id="KW-0460">Magnesium</keyword>
<keyword id="KW-0464">Manganese</keyword>
<keyword id="KW-0479">Metal-binding</keyword>
<keyword id="KW-1185">Reference proteome</keyword>
<keyword id="KW-0786">Thiamine pyrophosphate</keyword>
<keyword id="KW-0808">Transferase</keyword>